<reference key="1">
    <citation type="journal article" date="2000" name="Proc. Natl. Acad. Sci. U.S.A.">
        <title>Genome sequence of Halobacterium species NRC-1.</title>
        <authorList>
            <person name="Ng W.V."/>
            <person name="Kennedy S.P."/>
            <person name="Mahairas G.G."/>
            <person name="Berquist B."/>
            <person name="Pan M."/>
            <person name="Shukla H.D."/>
            <person name="Lasky S.R."/>
            <person name="Baliga N.S."/>
            <person name="Thorsson V."/>
            <person name="Sbrogna J."/>
            <person name="Swartzell S."/>
            <person name="Weir D."/>
            <person name="Hall J."/>
            <person name="Dahl T.A."/>
            <person name="Welti R."/>
            <person name="Goo Y.A."/>
            <person name="Leithauser B."/>
            <person name="Keller K."/>
            <person name="Cruz R."/>
            <person name="Danson M.J."/>
            <person name="Hough D.W."/>
            <person name="Maddocks D.G."/>
            <person name="Jablonski P.E."/>
            <person name="Krebs M.P."/>
            <person name="Angevine C.M."/>
            <person name="Dale H."/>
            <person name="Isenbarger T.A."/>
            <person name="Peck R.F."/>
            <person name="Pohlschroder M."/>
            <person name="Spudich J.L."/>
            <person name="Jung K.-H."/>
            <person name="Alam M."/>
            <person name="Freitas T."/>
            <person name="Hou S."/>
            <person name="Daniels C.J."/>
            <person name="Dennis P.P."/>
            <person name="Omer A.D."/>
            <person name="Ebhardt H."/>
            <person name="Lowe T.M."/>
            <person name="Liang P."/>
            <person name="Riley M."/>
            <person name="Hood L."/>
            <person name="DasSarma S."/>
        </authorList>
    </citation>
    <scope>NUCLEOTIDE SEQUENCE [LARGE SCALE GENOMIC DNA]</scope>
    <source>
        <strain>ATCC 700922 / JCM 11081 / NRC-1</strain>
    </source>
</reference>
<organism>
    <name type="scientific">Halobacterium salinarum (strain ATCC 700922 / JCM 11081 / NRC-1)</name>
    <name type="common">Halobacterium halobium</name>
    <dbReference type="NCBI Taxonomy" id="64091"/>
    <lineage>
        <taxon>Archaea</taxon>
        <taxon>Methanobacteriati</taxon>
        <taxon>Methanobacteriota</taxon>
        <taxon>Stenosarchaea group</taxon>
        <taxon>Halobacteria</taxon>
        <taxon>Halobacteriales</taxon>
        <taxon>Halobacteriaceae</taxon>
        <taxon>Halobacterium</taxon>
        <taxon>Halobacterium salinarum NRC-34001</taxon>
    </lineage>
</organism>
<dbReference type="EC" id="1.1.1.25" evidence="1"/>
<dbReference type="EMBL" id="AE004437">
    <property type="protein sequence ID" value="AAG18940.1"/>
    <property type="molecule type" value="Genomic_DNA"/>
</dbReference>
<dbReference type="PIR" id="H84196">
    <property type="entry name" value="H84196"/>
</dbReference>
<dbReference type="RefSeq" id="WP_010902235.1">
    <property type="nucleotide sequence ID" value="NC_002607.1"/>
</dbReference>
<dbReference type="SMR" id="Q9HS68"/>
<dbReference type="FunCoup" id="Q9HS68">
    <property type="interactions" value="54"/>
</dbReference>
<dbReference type="STRING" id="64091.VNG_0382G"/>
<dbReference type="PaxDb" id="64091-VNG_0382G"/>
<dbReference type="KEGG" id="hal:VNG_0382G"/>
<dbReference type="PATRIC" id="fig|64091.14.peg.283"/>
<dbReference type="HOGENOM" id="CLU_044063_4_3_2"/>
<dbReference type="InParanoid" id="Q9HS68"/>
<dbReference type="OrthoDB" id="8744at2157"/>
<dbReference type="PhylomeDB" id="Q9HS68"/>
<dbReference type="UniPathway" id="UPA00053">
    <property type="reaction ID" value="UER00087"/>
</dbReference>
<dbReference type="Proteomes" id="UP000000554">
    <property type="component" value="Chromosome"/>
</dbReference>
<dbReference type="GO" id="GO:0050661">
    <property type="term" value="F:NADP binding"/>
    <property type="evidence" value="ECO:0007669"/>
    <property type="project" value="InterPro"/>
</dbReference>
<dbReference type="GO" id="GO:0004764">
    <property type="term" value="F:shikimate 3-dehydrogenase (NADP+) activity"/>
    <property type="evidence" value="ECO:0000318"/>
    <property type="project" value="GO_Central"/>
</dbReference>
<dbReference type="GO" id="GO:0008652">
    <property type="term" value="P:amino acid biosynthetic process"/>
    <property type="evidence" value="ECO:0007669"/>
    <property type="project" value="UniProtKB-KW"/>
</dbReference>
<dbReference type="GO" id="GO:0009073">
    <property type="term" value="P:aromatic amino acid family biosynthetic process"/>
    <property type="evidence" value="ECO:0007669"/>
    <property type="project" value="UniProtKB-KW"/>
</dbReference>
<dbReference type="GO" id="GO:0009423">
    <property type="term" value="P:chorismate biosynthetic process"/>
    <property type="evidence" value="ECO:0000318"/>
    <property type="project" value="GO_Central"/>
</dbReference>
<dbReference type="GO" id="GO:0019632">
    <property type="term" value="P:shikimate metabolic process"/>
    <property type="evidence" value="ECO:0000318"/>
    <property type="project" value="GO_Central"/>
</dbReference>
<dbReference type="CDD" id="cd01065">
    <property type="entry name" value="NAD_bind_Shikimate_DH"/>
    <property type="match status" value="1"/>
</dbReference>
<dbReference type="Gene3D" id="3.40.50.10860">
    <property type="entry name" value="Leucine Dehydrogenase, chain A, domain 1"/>
    <property type="match status" value="1"/>
</dbReference>
<dbReference type="Gene3D" id="3.40.50.720">
    <property type="entry name" value="NAD(P)-binding Rossmann-like Domain"/>
    <property type="match status" value="1"/>
</dbReference>
<dbReference type="HAMAP" id="MF_00222">
    <property type="entry name" value="Shikimate_DH_AroE"/>
    <property type="match status" value="1"/>
</dbReference>
<dbReference type="InterPro" id="IPR046346">
    <property type="entry name" value="Aminoacid_DH-like_N_sf"/>
</dbReference>
<dbReference type="InterPro" id="IPR036291">
    <property type="entry name" value="NAD(P)-bd_dom_sf"/>
</dbReference>
<dbReference type="InterPro" id="IPR041121">
    <property type="entry name" value="SDH_C"/>
</dbReference>
<dbReference type="InterPro" id="IPR011342">
    <property type="entry name" value="Shikimate_DH"/>
</dbReference>
<dbReference type="InterPro" id="IPR013708">
    <property type="entry name" value="Shikimate_DH-bd_N"/>
</dbReference>
<dbReference type="InterPro" id="IPR022893">
    <property type="entry name" value="Shikimate_DH_fam"/>
</dbReference>
<dbReference type="InterPro" id="IPR006151">
    <property type="entry name" value="Shikm_DH/Glu-tRNA_Rdtase"/>
</dbReference>
<dbReference type="NCBIfam" id="TIGR00507">
    <property type="entry name" value="aroE"/>
    <property type="match status" value="1"/>
</dbReference>
<dbReference type="NCBIfam" id="NF001319">
    <property type="entry name" value="PRK00258.3-3"/>
    <property type="match status" value="1"/>
</dbReference>
<dbReference type="PANTHER" id="PTHR21089:SF1">
    <property type="entry name" value="BIFUNCTIONAL 3-DEHYDROQUINATE DEHYDRATASE_SHIKIMATE DEHYDROGENASE, CHLOROPLASTIC"/>
    <property type="match status" value="1"/>
</dbReference>
<dbReference type="PANTHER" id="PTHR21089">
    <property type="entry name" value="SHIKIMATE DEHYDROGENASE"/>
    <property type="match status" value="1"/>
</dbReference>
<dbReference type="Pfam" id="PF18317">
    <property type="entry name" value="SDH_C"/>
    <property type="match status" value="1"/>
</dbReference>
<dbReference type="Pfam" id="PF01488">
    <property type="entry name" value="Shikimate_DH"/>
    <property type="match status" value="1"/>
</dbReference>
<dbReference type="Pfam" id="PF08501">
    <property type="entry name" value="Shikimate_dh_N"/>
    <property type="match status" value="1"/>
</dbReference>
<dbReference type="PRINTS" id="PR00411">
    <property type="entry name" value="PNDRDTASEI"/>
</dbReference>
<dbReference type="SUPFAM" id="SSF53223">
    <property type="entry name" value="Aminoacid dehydrogenase-like, N-terminal domain"/>
    <property type="match status" value="1"/>
</dbReference>
<dbReference type="SUPFAM" id="SSF51735">
    <property type="entry name" value="NAD(P)-binding Rossmann-fold domains"/>
    <property type="match status" value="1"/>
</dbReference>
<gene>
    <name evidence="1" type="primary">aroE</name>
    <name type="ordered locus">VNG_0382G</name>
</gene>
<comment type="function">
    <text evidence="1">Involved in the biosynthesis of the chorismate, which leads to the biosynthesis of aromatic amino acids. Catalyzes the reversible NADPH linked reduction of 3-dehydroshikimate (DHSA) to yield shikimate (SA).</text>
</comment>
<comment type="catalytic activity">
    <reaction evidence="1">
        <text>shikimate + NADP(+) = 3-dehydroshikimate + NADPH + H(+)</text>
        <dbReference type="Rhea" id="RHEA:17737"/>
        <dbReference type="ChEBI" id="CHEBI:15378"/>
        <dbReference type="ChEBI" id="CHEBI:16630"/>
        <dbReference type="ChEBI" id="CHEBI:36208"/>
        <dbReference type="ChEBI" id="CHEBI:57783"/>
        <dbReference type="ChEBI" id="CHEBI:58349"/>
        <dbReference type="EC" id="1.1.1.25"/>
    </reaction>
</comment>
<comment type="pathway">
    <text evidence="1">Metabolic intermediate biosynthesis; chorismate biosynthesis; chorismate from D-erythrose 4-phosphate and phosphoenolpyruvate: step 4/7.</text>
</comment>
<comment type="subunit">
    <text evidence="1">Homodimer.</text>
</comment>
<comment type="similarity">
    <text evidence="1">Belongs to the shikimate dehydrogenase family.</text>
</comment>
<name>AROE_HALSA</name>
<accession>Q9HS68</accession>
<sequence length="266" mass="26646">MDVYGLIGNPVGHSLSPPLHAAAYDECGLDARYVTFEPAPDDAAAAIRGAGALGVAGLNVTAPFKQSAASAVATDSMAARVGAVNTIDFSGAAPRGYNTDVAGVKRAFAHHDVSLSGAQAVVVGAGGAGRAAAFALADAGATVRIANRTRAAADELAADVGGTAVGLGDLPRSLADATVLVHATTVGMDDPDTSPVSADALHDDLAVLDAVYSPVETRLLRDAAAAGATTIDGAWMLLYQGAEAFERWTGLDAPVAAMRAALRARL</sequence>
<protein>
    <recommendedName>
        <fullName evidence="1">Shikimate dehydrogenase (NADP(+))</fullName>
        <shortName evidence="1">SDH</shortName>
        <ecNumber evidence="1">1.1.1.25</ecNumber>
    </recommendedName>
</protein>
<proteinExistence type="inferred from homology"/>
<feature type="chain" id="PRO_0000136058" description="Shikimate dehydrogenase (NADP(+))">
    <location>
        <begin position="1"/>
        <end position="266"/>
    </location>
</feature>
<feature type="active site" description="Proton acceptor" evidence="1">
    <location>
        <position position="65"/>
    </location>
</feature>
<feature type="binding site" evidence="1">
    <location>
        <begin position="14"/>
        <end position="16"/>
    </location>
    <ligand>
        <name>shikimate</name>
        <dbReference type="ChEBI" id="CHEBI:36208"/>
    </ligand>
</feature>
<feature type="binding site" evidence="1">
    <location>
        <position position="61"/>
    </location>
    <ligand>
        <name>shikimate</name>
        <dbReference type="ChEBI" id="CHEBI:36208"/>
    </ligand>
</feature>
<feature type="binding site" evidence="1">
    <location>
        <position position="85"/>
    </location>
    <ligand>
        <name>shikimate</name>
        <dbReference type="ChEBI" id="CHEBI:36208"/>
    </ligand>
</feature>
<feature type="binding site" evidence="1">
    <location>
        <position position="100"/>
    </location>
    <ligand>
        <name>shikimate</name>
        <dbReference type="ChEBI" id="CHEBI:36208"/>
    </ligand>
</feature>
<feature type="binding site" evidence="1">
    <location>
        <begin position="124"/>
        <end position="128"/>
    </location>
    <ligand>
        <name>NADP(+)</name>
        <dbReference type="ChEBI" id="CHEBI:58349"/>
    </ligand>
</feature>
<feature type="binding site" evidence="1">
    <location>
        <position position="210"/>
    </location>
    <ligand>
        <name>NADP(+)</name>
        <dbReference type="ChEBI" id="CHEBI:58349"/>
    </ligand>
</feature>
<feature type="binding site" evidence="1">
    <location>
        <position position="212"/>
    </location>
    <ligand>
        <name>shikimate</name>
        <dbReference type="ChEBI" id="CHEBI:36208"/>
    </ligand>
</feature>
<feature type="binding site" evidence="1">
    <location>
        <position position="233"/>
    </location>
    <ligand>
        <name>NADP(+)</name>
        <dbReference type="ChEBI" id="CHEBI:58349"/>
    </ligand>
</feature>
<keyword id="KW-0028">Amino-acid biosynthesis</keyword>
<keyword id="KW-0057">Aromatic amino acid biosynthesis</keyword>
<keyword id="KW-0521">NADP</keyword>
<keyword id="KW-0560">Oxidoreductase</keyword>
<keyword id="KW-1185">Reference proteome</keyword>
<evidence type="ECO:0000255" key="1">
    <source>
        <dbReference type="HAMAP-Rule" id="MF_00222"/>
    </source>
</evidence>